<dbReference type="EMBL" id="CP001322">
    <property type="protein sequence ID" value="ACL05005.1"/>
    <property type="molecule type" value="Genomic_DNA"/>
</dbReference>
<dbReference type="RefSeq" id="WP_015948064.1">
    <property type="nucleotide sequence ID" value="NC_011768.1"/>
</dbReference>
<dbReference type="SMR" id="B8FJ78"/>
<dbReference type="KEGG" id="dal:Dalk_3316"/>
<dbReference type="eggNOG" id="COG0781">
    <property type="taxonomic scope" value="Bacteria"/>
</dbReference>
<dbReference type="HOGENOM" id="CLU_087843_3_3_7"/>
<dbReference type="Proteomes" id="UP000000739">
    <property type="component" value="Chromosome"/>
</dbReference>
<dbReference type="GO" id="GO:0005829">
    <property type="term" value="C:cytosol"/>
    <property type="evidence" value="ECO:0007669"/>
    <property type="project" value="TreeGrafter"/>
</dbReference>
<dbReference type="GO" id="GO:0003723">
    <property type="term" value="F:RNA binding"/>
    <property type="evidence" value="ECO:0007669"/>
    <property type="project" value="UniProtKB-UniRule"/>
</dbReference>
<dbReference type="GO" id="GO:0006353">
    <property type="term" value="P:DNA-templated transcription termination"/>
    <property type="evidence" value="ECO:0007669"/>
    <property type="project" value="UniProtKB-UniRule"/>
</dbReference>
<dbReference type="GO" id="GO:0031564">
    <property type="term" value="P:transcription antitermination"/>
    <property type="evidence" value="ECO:0007669"/>
    <property type="project" value="UniProtKB-KW"/>
</dbReference>
<dbReference type="CDD" id="cd00619">
    <property type="entry name" value="Terminator_NusB"/>
    <property type="match status" value="1"/>
</dbReference>
<dbReference type="Gene3D" id="1.10.940.10">
    <property type="entry name" value="NusB-like"/>
    <property type="match status" value="1"/>
</dbReference>
<dbReference type="HAMAP" id="MF_00073">
    <property type="entry name" value="NusB"/>
    <property type="match status" value="1"/>
</dbReference>
<dbReference type="InterPro" id="IPR035926">
    <property type="entry name" value="NusB-like_sf"/>
</dbReference>
<dbReference type="InterPro" id="IPR011605">
    <property type="entry name" value="NusB_fam"/>
</dbReference>
<dbReference type="InterPro" id="IPR006027">
    <property type="entry name" value="NusB_RsmB_TIM44"/>
</dbReference>
<dbReference type="NCBIfam" id="TIGR01951">
    <property type="entry name" value="nusB"/>
    <property type="match status" value="1"/>
</dbReference>
<dbReference type="PANTHER" id="PTHR11078:SF3">
    <property type="entry name" value="ANTITERMINATION NUSB DOMAIN-CONTAINING PROTEIN"/>
    <property type="match status" value="1"/>
</dbReference>
<dbReference type="PANTHER" id="PTHR11078">
    <property type="entry name" value="N UTILIZATION SUBSTANCE PROTEIN B-RELATED"/>
    <property type="match status" value="1"/>
</dbReference>
<dbReference type="Pfam" id="PF01029">
    <property type="entry name" value="NusB"/>
    <property type="match status" value="1"/>
</dbReference>
<dbReference type="SUPFAM" id="SSF48013">
    <property type="entry name" value="NusB-like"/>
    <property type="match status" value="1"/>
</dbReference>
<evidence type="ECO:0000255" key="1">
    <source>
        <dbReference type="HAMAP-Rule" id="MF_00073"/>
    </source>
</evidence>
<protein>
    <recommendedName>
        <fullName evidence="1">Transcription antitermination protein NusB</fullName>
    </recommendedName>
    <alternativeName>
        <fullName evidence="1">Antitermination factor NusB</fullName>
    </alternativeName>
</protein>
<comment type="function">
    <text evidence="1">Involved in transcription antitermination. Required for transcription of ribosomal RNA (rRNA) genes. Binds specifically to the boxA antiterminator sequence of the ribosomal RNA (rrn) operons.</text>
</comment>
<comment type="similarity">
    <text evidence="1">Belongs to the NusB family.</text>
</comment>
<reference key="1">
    <citation type="journal article" date="2012" name="Environ. Microbiol.">
        <title>The genome sequence of Desulfatibacillum alkenivorans AK-01: a blueprint for anaerobic alkane oxidation.</title>
        <authorList>
            <person name="Callaghan A.V."/>
            <person name="Morris B.E."/>
            <person name="Pereira I.A."/>
            <person name="McInerney M.J."/>
            <person name="Austin R.N."/>
            <person name="Groves J.T."/>
            <person name="Kukor J.J."/>
            <person name="Suflita J.M."/>
            <person name="Young L.Y."/>
            <person name="Zylstra G.J."/>
            <person name="Wawrik B."/>
        </authorList>
    </citation>
    <scope>NUCLEOTIDE SEQUENCE [LARGE SCALE GENOMIC DNA]</scope>
    <source>
        <strain>AK-01</strain>
    </source>
</reference>
<sequence length="143" mass="16414">MGKRRRARELALQSLFYVDSTSAPPLEALDLFCQNFPPPKDLAQFFYELAKGVINNQDEIDRLIEQHSNNWKLYRMSAVDLNLMRIAAYEFLFCPDVPRRVSINEAIDIGKRFGTAESGAFINGILDSIHLHLGKEEKAEKKR</sequence>
<keyword id="KW-1185">Reference proteome</keyword>
<keyword id="KW-0694">RNA-binding</keyword>
<keyword id="KW-0804">Transcription</keyword>
<keyword id="KW-0889">Transcription antitermination</keyword>
<keyword id="KW-0805">Transcription regulation</keyword>
<organism>
    <name type="scientific">Desulfatibacillum aliphaticivorans</name>
    <dbReference type="NCBI Taxonomy" id="218208"/>
    <lineage>
        <taxon>Bacteria</taxon>
        <taxon>Pseudomonadati</taxon>
        <taxon>Thermodesulfobacteriota</taxon>
        <taxon>Desulfobacteria</taxon>
        <taxon>Desulfobacterales</taxon>
        <taxon>Desulfatibacillaceae</taxon>
        <taxon>Desulfatibacillum</taxon>
    </lineage>
</organism>
<proteinExistence type="inferred from homology"/>
<feature type="chain" id="PRO_1000117046" description="Transcription antitermination protein NusB">
    <location>
        <begin position="1"/>
        <end position="143"/>
    </location>
</feature>
<name>NUSB_DESAL</name>
<gene>
    <name evidence="1" type="primary">nusB</name>
    <name type="ordered locus">Dalk_3316</name>
</gene>
<accession>B8FJ78</accession>